<comment type="subunit">
    <text evidence="1">Part of the 50S ribosomal subunit.</text>
</comment>
<comment type="similarity">
    <text evidence="1">Belongs to the universal ribosomal protein uL30 family.</text>
</comment>
<name>RL30_CLOB8</name>
<accession>A6LPS9</accession>
<feature type="chain" id="PRO_1000087243" description="Large ribosomal subunit protein uL30">
    <location>
        <begin position="1"/>
        <end position="59"/>
    </location>
</feature>
<gene>
    <name evidence="1" type="primary">rpmD</name>
    <name type="ordered locus">Cbei_0169</name>
</gene>
<keyword id="KW-0687">Ribonucleoprotein</keyword>
<keyword id="KW-0689">Ribosomal protein</keyword>
<reference key="1">
    <citation type="submission" date="2007-06" db="EMBL/GenBank/DDBJ databases">
        <title>Complete sequence of Clostridium beijerinckii NCIMB 8052.</title>
        <authorList>
            <consortium name="US DOE Joint Genome Institute"/>
            <person name="Copeland A."/>
            <person name="Lucas S."/>
            <person name="Lapidus A."/>
            <person name="Barry K."/>
            <person name="Detter J.C."/>
            <person name="Glavina del Rio T."/>
            <person name="Hammon N."/>
            <person name="Israni S."/>
            <person name="Dalin E."/>
            <person name="Tice H."/>
            <person name="Pitluck S."/>
            <person name="Sims D."/>
            <person name="Brettin T."/>
            <person name="Bruce D."/>
            <person name="Tapia R."/>
            <person name="Brainard J."/>
            <person name="Schmutz J."/>
            <person name="Larimer F."/>
            <person name="Land M."/>
            <person name="Hauser L."/>
            <person name="Kyrpides N."/>
            <person name="Mikhailova N."/>
            <person name="Bennet G."/>
            <person name="Cann I."/>
            <person name="Chen J.-S."/>
            <person name="Contreras A.L."/>
            <person name="Jones D."/>
            <person name="Kashket E."/>
            <person name="Mitchell W."/>
            <person name="Stoddard S."/>
            <person name="Schwarz W."/>
            <person name="Qureshi N."/>
            <person name="Young M."/>
            <person name="Shi Z."/>
            <person name="Ezeji T."/>
            <person name="White B."/>
            <person name="Blaschek H."/>
            <person name="Richardson P."/>
        </authorList>
    </citation>
    <scope>NUCLEOTIDE SEQUENCE [LARGE SCALE GENOMIC DNA]</scope>
    <source>
        <strain>ATCC 51743 / NCIMB 8052</strain>
    </source>
</reference>
<dbReference type="EMBL" id="CP000721">
    <property type="protein sequence ID" value="ABR32359.1"/>
    <property type="molecule type" value="Genomic_DNA"/>
</dbReference>
<dbReference type="RefSeq" id="WP_011967524.1">
    <property type="nucleotide sequence ID" value="NC_009617.1"/>
</dbReference>
<dbReference type="SMR" id="A6LPS9"/>
<dbReference type="GeneID" id="66343059"/>
<dbReference type="KEGG" id="cbe:Cbei_0169"/>
<dbReference type="eggNOG" id="COG1841">
    <property type="taxonomic scope" value="Bacteria"/>
</dbReference>
<dbReference type="HOGENOM" id="CLU_131047_2_1_9"/>
<dbReference type="Proteomes" id="UP000000565">
    <property type="component" value="Chromosome"/>
</dbReference>
<dbReference type="GO" id="GO:0022625">
    <property type="term" value="C:cytosolic large ribosomal subunit"/>
    <property type="evidence" value="ECO:0007669"/>
    <property type="project" value="TreeGrafter"/>
</dbReference>
<dbReference type="GO" id="GO:0003735">
    <property type="term" value="F:structural constituent of ribosome"/>
    <property type="evidence" value="ECO:0007669"/>
    <property type="project" value="InterPro"/>
</dbReference>
<dbReference type="GO" id="GO:0006412">
    <property type="term" value="P:translation"/>
    <property type="evidence" value="ECO:0007669"/>
    <property type="project" value="UniProtKB-UniRule"/>
</dbReference>
<dbReference type="CDD" id="cd01658">
    <property type="entry name" value="Ribosomal_L30"/>
    <property type="match status" value="1"/>
</dbReference>
<dbReference type="FunFam" id="3.30.1390.20:FF:000001">
    <property type="entry name" value="50S ribosomal protein L30"/>
    <property type="match status" value="1"/>
</dbReference>
<dbReference type="Gene3D" id="3.30.1390.20">
    <property type="entry name" value="Ribosomal protein L30, ferredoxin-like fold domain"/>
    <property type="match status" value="1"/>
</dbReference>
<dbReference type="HAMAP" id="MF_01371_B">
    <property type="entry name" value="Ribosomal_uL30_B"/>
    <property type="match status" value="1"/>
</dbReference>
<dbReference type="InterPro" id="IPR036919">
    <property type="entry name" value="Ribo_uL30_ferredoxin-like_sf"/>
</dbReference>
<dbReference type="InterPro" id="IPR005996">
    <property type="entry name" value="Ribosomal_uL30_bac-type"/>
</dbReference>
<dbReference type="InterPro" id="IPR016082">
    <property type="entry name" value="Ribosomal_uL30_ferredoxin-like"/>
</dbReference>
<dbReference type="NCBIfam" id="TIGR01308">
    <property type="entry name" value="rpmD_bact"/>
    <property type="match status" value="1"/>
</dbReference>
<dbReference type="PANTHER" id="PTHR15892:SF2">
    <property type="entry name" value="LARGE RIBOSOMAL SUBUNIT PROTEIN UL30M"/>
    <property type="match status" value="1"/>
</dbReference>
<dbReference type="PANTHER" id="PTHR15892">
    <property type="entry name" value="MITOCHONDRIAL RIBOSOMAL PROTEIN L30"/>
    <property type="match status" value="1"/>
</dbReference>
<dbReference type="Pfam" id="PF00327">
    <property type="entry name" value="Ribosomal_L30"/>
    <property type="match status" value="1"/>
</dbReference>
<dbReference type="PIRSF" id="PIRSF002211">
    <property type="entry name" value="Ribosomal_L30_bac-type"/>
    <property type="match status" value="1"/>
</dbReference>
<dbReference type="SUPFAM" id="SSF55129">
    <property type="entry name" value="Ribosomal protein L30p/L7e"/>
    <property type="match status" value="1"/>
</dbReference>
<proteinExistence type="inferred from homology"/>
<protein>
    <recommendedName>
        <fullName evidence="1">Large ribosomal subunit protein uL30</fullName>
    </recommendedName>
    <alternativeName>
        <fullName evidence="2">50S ribosomal protein L30</fullName>
    </alternativeName>
</protein>
<sequence length="59" mass="6614">MAKLRITLVKSLIGRKKDHIATANALGLTKIRKTVEPEATPQVQGMIKKIEYLLKVEEV</sequence>
<evidence type="ECO:0000255" key="1">
    <source>
        <dbReference type="HAMAP-Rule" id="MF_01371"/>
    </source>
</evidence>
<evidence type="ECO:0000305" key="2"/>
<organism>
    <name type="scientific">Clostridium beijerinckii (strain ATCC 51743 / NCIMB 8052)</name>
    <name type="common">Clostridium acetobutylicum</name>
    <dbReference type="NCBI Taxonomy" id="290402"/>
    <lineage>
        <taxon>Bacteria</taxon>
        <taxon>Bacillati</taxon>
        <taxon>Bacillota</taxon>
        <taxon>Clostridia</taxon>
        <taxon>Eubacteriales</taxon>
        <taxon>Clostridiaceae</taxon>
        <taxon>Clostridium</taxon>
    </lineage>
</organism>